<reference key="1">
    <citation type="journal article" date="2009" name="J. Bacteriol.">
        <title>Complete genome sequence of Erythrobacter litoralis HTCC2594.</title>
        <authorList>
            <person name="Oh H.M."/>
            <person name="Giovannoni S.J."/>
            <person name="Ferriera S."/>
            <person name="Johnson J."/>
            <person name="Cho J.C."/>
        </authorList>
    </citation>
    <scope>NUCLEOTIDE SEQUENCE [LARGE SCALE GENOMIC DNA]</scope>
    <source>
        <strain>HTCC2594</strain>
    </source>
</reference>
<evidence type="ECO:0000255" key="1">
    <source>
        <dbReference type="HAMAP-Rule" id="MF_00480"/>
    </source>
</evidence>
<evidence type="ECO:0000305" key="2"/>
<organism>
    <name type="scientific">Erythrobacter litoralis (strain HTCC2594)</name>
    <dbReference type="NCBI Taxonomy" id="314225"/>
    <lineage>
        <taxon>Bacteria</taxon>
        <taxon>Pseudomonadati</taxon>
        <taxon>Pseudomonadota</taxon>
        <taxon>Alphaproteobacteria</taxon>
        <taxon>Sphingomonadales</taxon>
        <taxon>Erythrobacteraceae</taxon>
        <taxon>Erythrobacter/Porphyrobacter group</taxon>
        <taxon>Erythrobacter</taxon>
    </lineage>
</organism>
<proteinExistence type="inferred from homology"/>
<sequence>MSRRRRPEKREILPDPKFGDQVLSKFMNNLMLDGKKAVAEGIVYTALDTVEAKAKTDPVQLFHDALNNIKPQVEVRSRRVGGATYQVPVEVRPERAQALAIRWMISAARGRPETTMAARLSGELMDAANNRGNAVKKREDAHRMAEANRAFSHYRW</sequence>
<dbReference type="EMBL" id="CP000157">
    <property type="protein sequence ID" value="ABC63735.1"/>
    <property type="molecule type" value="Genomic_DNA"/>
</dbReference>
<dbReference type="RefSeq" id="WP_011414566.1">
    <property type="nucleotide sequence ID" value="NC_007722.1"/>
</dbReference>
<dbReference type="SMR" id="Q2N9A6"/>
<dbReference type="STRING" id="314225.ELI_08215"/>
<dbReference type="KEGG" id="eli:ELI_08215"/>
<dbReference type="eggNOG" id="COG0049">
    <property type="taxonomic scope" value="Bacteria"/>
</dbReference>
<dbReference type="HOGENOM" id="CLU_072226_1_1_5"/>
<dbReference type="OrthoDB" id="9807653at2"/>
<dbReference type="Proteomes" id="UP000008808">
    <property type="component" value="Chromosome"/>
</dbReference>
<dbReference type="GO" id="GO:0015935">
    <property type="term" value="C:small ribosomal subunit"/>
    <property type="evidence" value="ECO:0007669"/>
    <property type="project" value="InterPro"/>
</dbReference>
<dbReference type="GO" id="GO:0019843">
    <property type="term" value="F:rRNA binding"/>
    <property type="evidence" value="ECO:0007669"/>
    <property type="project" value="UniProtKB-UniRule"/>
</dbReference>
<dbReference type="GO" id="GO:0003735">
    <property type="term" value="F:structural constituent of ribosome"/>
    <property type="evidence" value="ECO:0007669"/>
    <property type="project" value="InterPro"/>
</dbReference>
<dbReference type="GO" id="GO:0000049">
    <property type="term" value="F:tRNA binding"/>
    <property type="evidence" value="ECO:0007669"/>
    <property type="project" value="UniProtKB-UniRule"/>
</dbReference>
<dbReference type="GO" id="GO:0006412">
    <property type="term" value="P:translation"/>
    <property type="evidence" value="ECO:0007669"/>
    <property type="project" value="UniProtKB-UniRule"/>
</dbReference>
<dbReference type="CDD" id="cd14869">
    <property type="entry name" value="uS7_Bacteria"/>
    <property type="match status" value="1"/>
</dbReference>
<dbReference type="FunFam" id="1.10.455.10:FF:000001">
    <property type="entry name" value="30S ribosomal protein S7"/>
    <property type="match status" value="1"/>
</dbReference>
<dbReference type="Gene3D" id="1.10.455.10">
    <property type="entry name" value="Ribosomal protein S7 domain"/>
    <property type="match status" value="1"/>
</dbReference>
<dbReference type="HAMAP" id="MF_00480_B">
    <property type="entry name" value="Ribosomal_uS7_B"/>
    <property type="match status" value="1"/>
</dbReference>
<dbReference type="InterPro" id="IPR000235">
    <property type="entry name" value="Ribosomal_uS7"/>
</dbReference>
<dbReference type="InterPro" id="IPR005717">
    <property type="entry name" value="Ribosomal_uS7_bac/org-type"/>
</dbReference>
<dbReference type="InterPro" id="IPR020606">
    <property type="entry name" value="Ribosomal_uS7_CS"/>
</dbReference>
<dbReference type="InterPro" id="IPR023798">
    <property type="entry name" value="Ribosomal_uS7_dom"/>
</dbReference>
<dbReference type="InterPro" id="IPR036823">
    <property type="entry name" value="Ribosomal_uS7_dom_sf"/>
</dbReference>
<dbReference type="NCBIfam" id="TIGR01029">
    <property type="entry name" value="rpsG_bact"/>
    <property type="match status" value="1"/>
</dbReference>
<dbReference type="PANTHER" id="PTHR11205">
    <property type="entry name" value="RIBOSOMAL PROTEIN S7"/>
    <property type="match status" value="1"/>
</dbReference>
<dbReference type="Pfam" id="PF00177">
    <property type="entry name" value="Ribosomal_S7"/>
    <property type="match status" value="1"/>
</dbReference>
<dbReference type="PIRSF" id="PIRSF002122">
    <property type="entry name" value="RPS7p_RPS7a_RPS5e_RPS7o"/>
    <property type="match status" value="1"/>
</dbReference>
<dbReference type="SUPFAM" id="SSF47973">
    <property type="entry name" value="Ribosomal protein S7"/>
    <property type="match status" value="1"/>
</dbReference>
<dbReference type="PROSITE" id="PS00052">
    <property type="entry name" value="RIBOSOMAL_S7"/>
    <property type="match status" value="1"/>
</dbReference>
<gene>
    <name evidence="1" type="primary">rpsG</name>
    <name type="ordered locus">ELI_08215</name>
</gene>
<keyword id="KW-1185">Reference proteome</keyword>
<keyword id="KW-0687">Ribonucleoprotein</keyword>
<keyword id="KW-0689">Ribosomal protein</keyword>
<keyword id="KW-0694">RNA-binding</keyword>
<keyword id="KW-0699">rRNA-binding</keyword>
<keyword id="KW-0820">tRNA-binding</keyword>
<feature type="chain" id="PRO_1000014191" description="Small ribosomal subunit protein uS7">
    <location>
        <begin position="1"/>
        <end position="156"/>
    </location>
</feature>
<accession>Q2N9A6</accession>
<name>RS7_ERYLH</name>
<protein>
    <recommendedName>
        <fullName evidence="1">Small ribosomal subunit protein uS7</fullName>
    </recommendedName>
    <alternativeName>
        <fullName evidence="2">30S ribosomal protein S7</fullName>
    </alternativeName>
</protein>
<comment type="function">
    <text evidence="1">One of the primary rRNA binding proteins, it binds directly to 16S rRNA where it nucleates assembly of the head domain of the 30S subunit. Is located at the subunit interface close to the decoding center, probably blocks exit of the E-site tRNA.</text>
</comment>
<comment type="subunit">
    <text evidence="1">Part of the 30S ribosomal subunit. Contacts proteins S9 and S11.</text>
</comment>
<comment type="similarity">
    <text evidence="1">Belongs to the universal ribosomal protein uS7 family.</text>
</comment>